<sequence>MSTSSHSGDCAAITSNSNSTIILSAIGVVFGDIGTSPLYTLKEAFSPNYGLAPNHDTVLGILSLIFWAMMLVVTIKYVTVIMRVDNDGEGGIMALTALTQRTMPFGSRSIYIVGILGIFGTSLFFGDGIITPAISVLSAVEGLEVAEPHMKAFVVPITLAVLILLFLCQRFGTERVGKTFGPITFLWFIAIGVVGVYNIIQAPEVLYAINPWWGLHFFLEHGWHSMFVLGAVVLAVTGGEALYADMGHFGAKAIRHAWMYVVLPMLALNYLGQGALVLSNPTAIGNPFYQSIPDWGLYPMIALATAAAVIASQALITGSYSLSSQAMQLGYIPRMNVRHTSQSTIGQIYVPTVNWTLLMLVILTVIGFGDSTSMASAYGVAVTGTMMITTVLMIIYARANPRVPRLMLLMIAIVFIAVDGAFFYANIIKFMDGAWFPLLLGVVIFTFMRTWLRGRKLLHEEMRKDGINLDNFLPGLMLAPPVKVPGTAVFLTADSTVVPHALMHNLKHNKVLHERNVFLTVKTLKIPYAANSERLKIEPISNGFYRVHIRFGFMETPDVPSALMCSKDHAGIDFDPMHTTFFVSRETVIPSANRGMPIWRDKLFVLMHRNAAPANAFFRIPGNRLVELGTQVEI</sequence>
<dbReference type="EMBL" id="AE009442">
    <property type="protein sequence ID" value="AAO28753.1"/>
    <property type="molecule type" value="Genomic_DNA"/>
</dbReference>
<dbReference type="RefSeq" id="WP_004572898.1">
    <property type="nucleotide sequence ID" value="NC_004556.1"/>
</dbReference>
<dbReference type="KEGG" id="xft:PD_0888"/>
<dbReference type="HOGENOM" id="CLU_008142_4_2_6"/>
<dbReference type="Proteomes" id="UP000002516">
    <property type="component" value="Chromosome"/>
</dbReference>
<dbReference type="GO" id="GO:0005886">
    <property type="term" value="C:plasma membrane"/>
    <property type="evidence" value="ECO:0007669"/>
    <property type="project" value="UniProtKB-SubCell"/>
</dbReference>
<dbReference type="GO" id="GO:0015079">
    <property type="term" value="F:potassium ion transmembrane transporter activity"/>
    <property type="evidence" value="ECO:0007669"/>
    <property type="project" value="UniProtKB-UniRule"/>
</dbReference>
<dbReference type="GO" id="GO:0015293">
    <property type="term" value="F:symporter activity"/>
    <property type="evidence" value="ECO:0007669"/>
    <property type="project" value="UniProtKB-UniRule"/>
</dbReference>
<dbReference type="HAMAP" id="MF_01522">
    <property type="entry name" value="Kup"/>
    <property type="match status" value="1"/>
</dbReference>
<dbReference type="InterPro" id="IPR003855">
    <property type="entry name" value="K+_transporter"/>
</dbReference>
<dbReference type="InterPro" id="IPR053952">
    <property type="entry name" value="K_trans_C"/>
</dbReference>
<dbReference type="InterPro" id="IPR053951">
    <property type="entry name" value="K_trans_N"/>
</dbReference>
<dbReference type="InterPro" id="IPR023051">
    <property type="entry name" value="Kup"/>
</dbReference>
<dbReference type="PANTHER" id="PTHR30540:SF79">
    <property type="entry name" value="LOW AFFINITY POTASSIUM TRANSPORT SYSTEM PROTEIN KUP"/>
    <property type="match status" value="1"/>
</dbReference>
<dbReference type="PANTHER" id="PTHR30540">
    <property type="entry name" value="OSMOTIC STRESS POTASSIUM TRANSPORTER"/>
    <property type="match status" value="1"/>
</dbReference>
<dbReference type="Pfam" id="PF02705">
    <property type="entry name" value="K_trans"/>
    <property type="match status" value="1"/>
</dbReference>
<dbReference type="Pfam" id="PF22776">
    <property type="entry name" value="K_trans_C"/>
    <property type="match status" value="1"/>
</dbReference>
<proteinExistence type="inferred from homology"/>
<feature type="chain" id="PRO_0000209072" description="Probable potassium transport system protein Kup">
    <location>
        <begin position="1"/>
        <end position="634"/>
    </location>
</feature>
<feature type="transmembrane region" description="Helical" evidence="1">
    <location>
        <begin position="21"/>
        <end position="41"/>
    </location>
</feature>
<feature type="transmembrane region" description="Helical" evidence="1">
    <location>
        <begin position="58"/>
        <end position="78"/>
    </location>
</feature>
<feature type="transmembrane region" description="Helical" evidence="1">
    <location>
        <begin position="110"/>
        <end position="130"/>
    </location>
</feature>
<feature type="transmembrane region" description="Helical" evidence="1">
    <location>
        <begin position="148"/>
        <end position="168"/>
    </location>
</feature>
<feature type="transmembrane region" description="Helical" evidence="1">
    <location>
        <begin position="180"/>
        <end position="200"/>
    </location>
</feature>
<feature type="transmembrane region" description="Helical" evidence="1">
    <location>
        <begin position="217"/>
        <end position="237"/>
    </location>
</feature>
<feature type="transmembrane region" description="Helical" evidence="1">
    <location>
        <begin position="258"/>
        <end position="278"/>
    </location>
</feature>
<feature type="transmembrane region" description="Helical" evidence="1">
    <location>
        <begin position="296"/>
        <end position="316"/>
    </location>
</feature>
<feature type="transmembrane region" description="Helical" evidence="1">
    <location>
        <begin position="348"/>
        <end position="368"/>
    </location>
</feature>
<feature type="transmembrane region" description="Helical" evidence="1">
    <location>
        <begin position="377"/>
        <end position="397"/>
    </location>
</feature>
<feature type="transmembrane region" description="Helical" evidence="1">
    <location>
        <begin position="408"/>
        <end position="428"/>
    </location>
</feature>
<feature type="transmembrane region" description="Helical" evidence="1">
    <location>
        <begin position="432"/>
        <end position="452"/>
    </location>
</feature>
<organism>
    <name type="scientific">Xylella fastidiosa (strain Temecula1 / ATCC 700964)</name>
    <dbReference type="NCBI Taxonomy" id="183190"/>
    <lineage>
        <taxon>Bacteria</taxon>
        <taxon>Pseudomonadati</taxon>
        <taxon>Pseudomonadota</taxon>
        <taxon>Gammaproteobacteria</taxon>
        <taxon>Lysobacterales</taxon>
        <taxon>Lysobacteraceae</taxon>
        <taxon>Xylella</taxon>
    </lineage>
</organism>
<keyword id="KW-0997">Cell inner membrane</keyword>
<keyword id="KW-1003">Cell membrane</keyword>
<keyword id="KW-0406">Ion transport</keyword>
<keyword id="KW-0472">Membrane</keyword>
<keyword id="KW-0630">Potassium</keyword>
<keyword id="KW-0633">Potassium transport</keyword>
<keyword id="KW-1185">Reference proteome</keyword>
<keyword id="KW-0769">Symport</keyword>
<keyword id="KW-0812">Transmembrane</keyword>
<keyword id="KW-1133">Transmembrane helix</keyword>
<keyword id="KW-0813">Transport</keyword>
<protein>
    <recommendedName>
        <fullName evidence="1">Probable potassium transport system protein Kup</fullName>
    </recommendedName>
</protein>
<gene>
    <name evidence="1" type="primary">kup</name>
    <name type="ordered locus">PD_0888</name>
</gene>
<evidence type="ECO:0000255" key="1">
    <source>
        <dbReference type="HAMAP-Rule" id="MF_01522"/>
    </source>
</evidence>
<reference key="1">
    <citation type="journal article" date="2003" name="J. Bacteriol.">
        <title>Comparative analyses of the complete genome sequences of Pierce's disease and citrus variegated chlorosis strains of Xylella fastidiosa.</title>
        <authorList>
            <person name="Van Sluys M.A."/>
            <person name="de Oliveira M.C."/>
            <person name="Monteiro-Vitorello C.B."/>
            <person name="Miyaki C.Y."/>
            <person name="Furlan L.R."/>
            <person name="Camargo L.E.A."/>
            <person name="da Silva A.C.R."/>
            <person name="Moon D.H."/>
            <person name="Takita M.A."/>
            <person name="Lemos E.G.M."/>
            <person name="Machado M.A."/>
            <person name="Ferro M.I.T."/>
            <person name="da Silva F.R."/>
            <person name="Goldman M.H.S."/>
            <person name="Goldman G.H."/>
            <person name="Lemos M.V.F."/>
            <person name="El-Dorry H."/>
            <person name="Tsai S.M."/>
            <person name="Carrer H."/>
            <person name="Carraro D.M."/>
            <person name="de Oliveira R.C."/>
            <person name="Nunes L.R."/>
            <person name="Siqueira W.J."/>
            <person name="Coutinho L.L."/>
            <person name="Kimura E.T."/>
            <person name="Ferro E.S."/>
            <person name="Harakava R."/>
            <person name="Kuramae E.E."/>
            <person name="Marino C.L."/>
            <person name="Giglioti E."/>
            <person name="Abreu I.L."/>
            <person name="Alves L.M.C."/>
            <person name="do Amaral A.M."/>
            <person name="Baia G.S."/>
            <person name="Blanco S.R."/>
            <person name="Brito M.S."/>
            <person name="Cannavan F.S."/>
            <person name="Celestino A.V."/>
            <person name="da Cunha A.F."/>
            <person name="Fenille R.C."/>
            <person name="Ferro J.A."/>
            <person name="Formighieri E.F."/>
            <person name="Kishi L.T."/>
            <person name="Leoni S.G."/>
            <person name="Oliveira A.R."/>
            <person name="Rosa V.E. Jr."/>
            <person name="Sassaki F.T."/>
            <person name="Sena J.A.D."/>
            <person name="de Souza A.A."/>
            <person name="Truffi D."/>
            <person name="Tsukumo F."/>
            <person name="Yanai G.M."/>
            <person name="Zaros L.G."/>
            <person name="Civerolo E.L."/>
            <person name="Simpson A.J.G."/>
            <person name="Almeida N.F. Jr."/>
            <person name="Setubal J.C."/>
            <person name="Kitajima J.P."/>
        </authorList>
    </citation>
    <scope>NUCLEOTIDE SEQUENCE [LARGE SCALE GENOMIC DNA]</scope>
    <source>
        <strain>Temecula1 / ATCC 700964</strain>
    </source>
</reference>
<name>KUP_XYLFT</name>
<comment type="function">
    <text evidence="1">Transport of potassium into the cell. Likely operates as a K(+):H(+) symporter.</text>
</comment>
<comment type="catalytic activity">
    <reaction evidence="1">
        <text>K(+)(in) + H(+)(in) = K(+)(out) + H(+)(out)</text>
        <dbReference type="Rhea" id="RHEA:28490"/>
        <dbReference type="ChEBI" id="CHEBI:15378"/>
        <dbReference type="ChEBI" id="CHEBI:29103"/>
    </reaction>
    <physiologicalReaction direction="right-to-left" evidence="1">
        <dbReference type="Rhea" id="RHEA:28492"/>
    </physiologicalReaction>
</comment>
<comment type="subcellular location">
    <subcellularLocation>
        <location evidence="1">Cell inner membrane</location>
        <topology evidence="1">Multi-pass membrane protein</topology>
    </subcellularLocation>
</comment>
<comment type="similarity">
    <text evidence="1">Belongs to the HAK/KUP transporter (TC 2.A.72) family.</text>
</comment>
<accession>Q87D01</accession>